<dbReference type="EMBL" id="CU207211">
    <property type="protein sequence ID" value="CAL61985.1"/>
    <property type="molecule type" value="Genomic_DNA"/>
</dbReference>
<dbReference type="SMR" id="A4G648"/>
<dbReference type="STRING" id="204773.HEAR1830"/>
<dbReference type="KEGG" id="har:HEAR1830"/>
<dbReference type="eggNOG" id="COG0184">
    <property type="taxonomic scope" value="Bacteria"/>
</dbReference>
<dbReference type="HOGENOM" id="CLU_148518_0_0_4"/>
<dbReference type="OrthoDB" id="9799262at2"/>
<dbReference type="Proteomes" id="UP000006697">
    <property type="component" value="Chromosome"/>
</dbReference>
<dbReference type="GO" id="GO:0022627">
    <property type="term" value="C:cytosolic small ribosomal subunit"/>
    <property type="evidence" value="ECO:0007669"/>
    <property type="project" value="TreeGrafter"/>
</dbReference>
<dbReference type="GO" id="GO:0019843">
    <property type="term" value="F:rRNA binding"/>
    <property type="evidence" value="ECO:0007669"/>
    <property type="project" value="UniProtKB-UniRule"/>
</dbReference>
<dbReference type="GO" id="GO:0003735">
    <property type="term" value="F:structural constituent of ribosome"/>
    <property type="evidence" value="ECO:0007669"/>
    <property type="project" value="InterPro"/>
</dbReference>
<dbReference type="GO" id="GO:0006412">
    <property type="term" value="P:translation"/>
    <property type="evidence" value="ECO:0007669"/>
    <property type="project" value="UniProtKB-UniRule"/>
</dbReference>
<dbReference type="CDD" id="cd00353">
    <property type="entry name" value="Ribosomal_S15p_S13e"/>
    <property type="match status" value="1"/>
</dbReference>
<dbReference type="FunFam" id="1.10.287.10:FF:000002">
    <property type="entry name" value="30S ribosomal protein S15"/>
    <property type="match status" value="1"/>
</dbReference>
<dbReference type="Gene3D" id="6.10.250.3130">
    <property type="match status" value="1"/>
</dbReference>
<dbReference type="Gene3D" id="1.10.287.10">
    <property type="entry name" value="S15/NS1, RNA-binding"/>
    <property type="match status" value="1"/>
</dbReference>
<dbReference type="HAMAP" id="MF_01343_B">
    <property type="entry name" value="Ribosomal_uS15_B"/>
    <property type="match status" value="1"/>
</dbReference>
<dbReference type="InterPro" id="IPR000589">
    <property type="entry name" value="Ribosomal_uS15"/>
</dbReference>
<dbReference type="InterPro" id="IPR005290">
    <property type="entry name" value="Ribosomal_uS15_bac-type"/>
</dbReference>
<dbReference type="InterPro" id="IPR009068">
    <property type="entry name" value="uS15_NS1_RNA-bd_sf"/>
</dbReference>
<dbReference type="NCBIfam" id="TIGR00952">
    <property type="entry name" value="S15_bact"/>
    <property type="match status" value="1"/>
</dbReference>
<dbReference type="PANTHER" id="PTHR23321">
    <property type="entry name" value="RIBOSOMAL PROTEIN S15, BACTERIAL AND ORGANELLAR"/>
    <property type="match status" value="1"/>
</dbReference>
<dbReference type="PANTHER" id="PTHR23321:SF26">
    <property type="entry name" value="SMALL RIBOSOMAL SUBUNIT PROTEIN US15M"/>
    <property type="match status" value="1"/>
</dbReference>
<dbReference type="Pfam" id="PF00312">
    <property type="entry name" value="Ribosomal_S15"/>
    <property type="match status" value="1"/>
</dbReference>
<dbReference type="SMART" id="SM01387">
    <property type="entry name" value="Ribosomal_S15"/>
    <property type="match status" value="1"/>
</dbReference>
<dbReference type="SUPFAM" id="SSF47060">
    <property type="entry name" value="S15/NS1 RNA-binding domain"/>
    <property type="match status" value="1"/>
</dbReference>
<organism>
    <name type="scientific">Herminiimonas arsenicoxydans</name>
    <dbReference type="NCBI Taxonomy" id="204773"/>
    <lineage>
        <taxon>Bacteria</taxon>
        <taxon>Pseudomonadati</taxon>
        <taxon>Pseudomonadota</taxon>
        <taxon>Betaproteobacteria</taxon>
        <taxon>Burkholderiales</taxon>
        <taxon>Oxalobacteraceae</taxon>
        <taxon>Herminiimonas</taxon>
    </lineage>
</organism>
<reference key="1">
    <citation type="journal article" date="2007" name="PLoS Genet.">
        <title>A tale of two oxidation states: bacterial colonization of arsenic-rich environments.</title>
        <authorList>
            <person name="Muller D."/>
            <person name="Medigue C."/>
            <person name="Koechler S."/>
            <person name="Barbe V."/>
            <person name="Barakat M."/>
            <person name="Talla E."/>
            <person name="Bonnefoy V."/>
            <person name="Krin E."/>
            <person name="Arsene-Ploetze F."/>
            <person name="Carapito C."/>
            <person name="Chandler M."/>
            <person name="Cournoyer B."/>
            <person name="Cruveiller S."/>
            <person name="Dossat C."/>
            <person name="Duval S."/>
            <person name="Heymann M."/>
            <person name="Leize E."/>
            <person name="Lieutaud A."/>
            <person name="Lievremont D."/>
            <person name="Makita Y."/>
            <person name="Mangenot S."/>
            <person name="Nitschke W."/>
            <person name="Ortet P."/>
            <person name="Perdrial N."/>
            <person name="Schoepp B."/>
            <person name="Siguier P."/>
            <person name="Simeonova D.D."/>
            <person name="Rouy Z."/>
            <person name="Segurens B."/>
            <person name="Turlin E."/>
            <person name="Vallenet D."/>
            <person name="van Dorsselaer A."/>
            <person name="Weiss S."/>
            <person name="Weissenbach J."/>
            <person name="Lett M.-C."/>
            <person name="Danchin A."/>
            <person name="Bertin P.N."/>
        </authorList>
    </citation>
    <scope>NUCLEOTIDE SEQUENCE [LARGE SCALE GENOMIC DNA]</scope>
    <source>
        <strain>ULPAs1</strain>
    </source>
</reference>
<name>RS15_HERAR</name>
<gene>
    <name evidence="1" type="primary">rpsO</name>
    <name type="ordered locus">HEAR1830</name>
</gene>
<proteinExistence type="inferred from homology"/>
<feature type="chain" id="PRO_1000067690" description="Small ribosomal subunit protein uS15">
    <location>
        <begin position="1"/>
        <end position="89"/>
    </location>
</feature>
<evidence type="ECO:0000255" key="1">
    <source>
        <dbReference type="HAMAP-Rule" id="MF_01343"/>
    </source>
</evidence>
<evidence type="ECO:0000305" key="2"/>
<protein>
    <recommendedName>
        <fullName evidence="1">Small ribosomal subunit protein uS15</fullName>
    </recommendedName>
    <alternativeName>
        <fullName evidence="2">30S ribosomal protein S15</fullName>
    </alternativeName>
</protein>
<comment type="function">
    <text evidence="1">One of the primary rRNA binding proteins, it binds directly to 16S rRNA where it helps nucleate assembly of the platform of the 30S subunit by binding and bridging several RNA helices of the 16S rRNA.</text>
</comment>
<comment type="function">
    <text evidence="1">Forms an intersubunit bridge (bridge B4) with the 23S rRNA of the 50S subunit in the ribosome.</text>
</comment>
<comment type="subunit">
    <text evidence="1">Part of the 30S ribosomal subunit. Forms a bridge to the 50S subunit in the 70S ribosome, contacting the 23S rRNA.</text>
</comment>
<comment type="similarity">
    <text evidence="1">Belongs to the universal ribosomal protein uS15 family.</text>
</comment>
<keyword id="KW-1185">Reference proteome</keyword>
<keyword id="KW-0687">Ribonucleoprotein</keyword>
<keyword id="KW-0689">Ribosomal protein</keyword>
<keyword id="KW-0694">RNA-binding</keyword>
<keyword id="KW-0699">rRNA-binding</keyword>
<sequence length="89" mass="9956">MSLEKTSKAAIVADNARGANDTGSPEVQVALLTARINDLNGHFKAHSKDHHSRRGLIMMVNRRKSLLSYLKNKDATRYRDLIAKLGLRK</sequence>
<accession>A4G648</accession>